<reference key="1">
    <citation type="journal article" date="2008" name="Genome Res.">
        <title>Comparative genome analysis of Salmonella enteritidis PT4 and Salmonella gallinarum 287/91 provides insights into evolutionary and host adaptation pathways.</title>
        <authorList>
            <person name="Thomson N.R."/>
            <person name="Clayton D.J."/>
            <person name="Windhorst D."/>
            <person name="Vernikos G."/>
            <person name="Davidson S."/>
            <person name="Churcher C."/>
            <person name="Quail M.A."/>
            <person name="Stevens M."/>
            <person name="Jones M.A."/>
            <person name="Watson M."/>
            <person name="Barron A."/>
            <person name="Layton A."/>
            <person name="Pickard D."/>
            <person name="Kingsley R.A."/>
            <person name="Bignell A."/>
            <person name="Clark L."/>
            <person name="Harris B."/>
            <person name="Ormond D."/>
            <person name="Abdellah Z."/>
            <person name="Brooks K."/>
            <person name="Cherevach I."/>
            <person name="Chillingworth T."/>
            <person name="Woodward J."/>
            <person name="Norberczak H."/>
            <person name="Lord A."/>
            <person name="Arrowsmith C."/>
            <person name="Jagels K."/>
            <person name="Moule S."/>
            <person name="Mungall K."/>
            <person name="Saunders M."/>
            <person name="Whitehead S."/>
            <person name="Chabalgoity J.A."/>
            <person name="Maskell D."/>
            <person name="Humphreys T."/>
            <person name="Roberts M."/>
            <person name="Barrow P.A."/>
            <person name="Dougan G."/>
            <person name="Parkhill J."/>
        </authorList>
    </citation>
    <scope>NUCLEOTIDE SEQUENCE [LARGE SCALE GENOMIC DNA]</scope>
    <source>
        <strain>287/91 / NCTC 13346</strain>
    </source>
</reference>
<accession>B5R7Y9</accession>
<sequence>MKLQLVAVGTKMPDWVQTGFTEYLRRFPKDMPFELIEIPAGKRGKNADIKRILDKEGEQMLAAAGKNRIVTLDIPGKPWDTPQLANELERWKQDGRDVSLLIGGPEGLSPACKAAAEQSWSLSALTLPHPLVRVLVAESLYRAWSITTNHPYHRE</sequence>
<keyword id="KW-0963">Cytoplasm</keyword>
<keyword id="KW-0489">Methyltransferase</keyword>
<keyword id="KW-0698">rRNA processing</keyword>
<keyword id="KW-0949">S-adenosyl-L-methionine</keyword>
<keyword id="KW-0808">Transferase</keyword>
<evidence type="ECO:0000255" key="1">
    <source>
        <dbReference type="HAMAP-Rule" id="MF_00658"/>
    </source>
</evidence>
<comment type="function">
    <text evidence="1">Specifically methylates the pseudouridine at position 1915 (m3Psi1915) in 23S rRNA.</text>
</comment>
<comment type="catalytic activity">
    <reaction evidence="1">
        <text>pseudouridine(1915) in 23S rRNA + S-adenosyl-L-methionine = N(3)-methylpseudouridine(1915) in 23S rRNA + S-adenosyl-L-homocysteine + H(+)</text>
        <dbReference type="Rhea" id="RHEA:42752"/>
        <dbReference type="Rhea" id="RHEA-COMP:10221"/>
        <dbReference type="Rhea" id="RHEA-COMP:10222"/>
        <dbReference type="ChEBI" id="CHEBI:15378"/>
        <dbReference type="ChEBI" id="CHEBI:57856"/>
        <dbReference type="ChEBI" id="CHEBI:59789"/>
        <dbReference type="ChEBI" id="CHEBI:65314"/>
        <dbReference type="ChEBI" id="CHEBI:74486"/>
        <dbReference type="EC" id="2.1.1.177"/>
    </reaction>
</comment>
<comment type="subunit">
    <text evidence="1">Homodimer.</text>
</comment>
<comment type="subcellular location">
    <subcellularLocation>
        <location evidence="1">Cytoplasm</location>
    </subcellularLocation>
</comment>
<comment type="similarity">
    <text evidence="1">Belongs to the RNA methyltransferase RlmH family.</text>
</comment>
<proteinExistence type="inferred from homology"/>
<protein>
    <recommendedName>
        <fullName evidence="1">Ribosomal RNA large subunit methyltransferase H</fullName>
        <ecNumber evidence="1">2.1.1.177</ecNumber>
    </recommendedName>
    <alternativeName>
        <fullName evidence="1">23S rRNA (pseudouridine1915-N3)-methyltransferase</fullName>
    </alternativeName>
    <alternativeName>
        <fullName evidence="1">23S rRNA m3Psi1915 methyltransferase</fullName>
    </alternativeName>
    <alternativeName>
        <fullName evidence="1">rRNA (pseudouridine-N3-)-methyltransferase RlmH</fullName>
    </alternativeName>
</protein>
<name>RLMH_SALG2</name>
<feature type="chain" id="PRO_0000366651" description="Ribosomal RNA large subunit methyltransferase H">
    <location>
        <begin position="1"/>
        <end position="155"/>
    </location>
</feature>
<feature type="binding site" evidence="1">
    <location>
        <position position="72"/>
    </location>
    <ligand>
        <name>S-adenosyl-L-methionine</name>
        <dbReference type="ChEBI" id="CHEBI:59789"/>
    </ligand>
</feature>
<feature type="binding site" evidence="1">
    <location>
        <position position="103"/>
    </location>
    <ligand>
        <name>S-adenosyl-L-methionine</name>
        <dbReference type="ChEBI" id="CHEBI:59789"/>
    </ligand>
</feature>
<feature type="binding site" evidence="1">
    <location>
        <begin position="122"/>
        <end position="127"/>
    </location>
    <ligand>
        <name>S-adenosyl-L-methionine</name>
        <dbReference type="ChEBI" id="CHEBI:59789"/>
    </ligand>
</feature>
<gene>
    <name evidence="1" type="primary">rlmH</name>
    <name type="ordered locus">SG0645</name>
</gene>
<organism>
    <name type="scientific">Salmonella gallinarum (strain 287/91 / NCTC 13346)</name>
    <dbReference type="NCBI Taxonomy" id="550538"/>
    <lineage>
        <taxon>Bacteria</taxon>
        <taxon>Pseudomonadati</taxon>
        <taxon>Pseudomonadota</taxon>
        <taxon>Gammaproteobacteria</taxon>
        <taxon>Enterobacterales</taxon>
        <taxon>Enterobacteriaceae</taxon>
        <taxon>Salmonella</taxon>
    </lineage>
</organism>
<dbReference type="EC" id="2.1.1.177" evidence="1"/>
<dbReference type="EMBL" id="AM933173">
    <property type="protein sequence ID" value="CAR36541.1"/>
    <property type="molecule type" value="Genomic_DNA"/>
</dbReference>
<dbReference type="RefSeq" id="WP_000776107.1">
    <property type="nucleotide sequence ID" value="NC_011274.1"/>
</dbReference>
<dbReference type="SMR" id="B5R7Y9"/>
<dbReference type="GeneID" id="66755108"/>
<dbReference type="KEGG" id="seg:SG0645"/>
<dbReference type="HOGENOM" id="CLU_100552_1_0_6"/>
<dbReference type="Proteomes" id="UP000008321">
    <property type="component" value="Chromosome"/>
</dbReference>
<dbReference type="GO" id="GO:0005737">
    <property type="term" value="C:cytoplasm"/>
    <property type="evidence" value="ECO:0007669"/>
    <property type="project" value="UniProtKB-SubCell"/>
</dbReference>
<dbReference type="GO" id="GO:0070038">
    <property type="term" value="F:rRNA (pseudouridine-N3-)-methyltransferase activity"/>
    <property type="evidence" value="ECO:0007669"/>
    <property type="project" value="UniProtKB-UniRule"/>
</dbReference>
<dbReference type="CDD" id="cd18081">
    <property type="entry name" value="RlmH-like"/>
    <property type="match status" value="1"/>
</dbReference>
<dbReference type="FunFam" id="3.40.1280.10:FF:000004">
    <property type="entry name" value="Ribosomal RNA large subunit methyltransferase H"/>
    <property type="match status" value="1"/>
</dbReference>
<dbReference type="Gene3D" id="3.40.1280.10">
    <property type="match status" value="1"/>
</dbReference>
<dbReference type="HAMAP" id="MF_00658">
    <property type="entry name" value="23SrRNA_methyltr_H"/>
    <property type="match status" value="1"/>
</dbReference>
<dbReference type="InterPro" id="IPR029028">
    <property type="entry name" value="Alpha/beta_knot_MTases"/>
</dbReference>
<dbReference type="InterPro" id="IPR003742">
    <property type="entry name" value="RlmH-like"/>
</dbReference>
<dbReference type="InterPro" id="IPR029026">
    <property type="entry name" value="tRNA_m1G_MTases_N"/>
</dbReference>
<dbReference type="NCBIfam" id="NF000984">
    <property type="entry name" value="PRK00103.1-1"/>
    <property type="match status" value="1"/>
</dbReference>
<dbReference type="NCBIfam" id="NF000986">
    <property type="entry name" value="PRK00103.1-4"/>
    <property type="match status" value="1"/>
</dbReference>
<dbReference type="NCBIfam" id="TIGR00246">
    <property type="entry name" value="tRNA_RlmH_YbeA"/>
    <property type="match status" value="1"/>
</dbReference>
<dbReference type="PANTHER" id="PTHR33603">
    <property type="entry name" value="METHYLTRANSFERASE"/>
    <property type="match status" value="1"/>
</dbReference>
<dbReference type="PANTHER" id="PTHR33603:SF1">
    <property type="entry name" value="RIBOSOMAL RNA LARGE SUBUNIT METHYLTRANSFERASE H"/>
    <property type="match status" value="1"/>
</dbReference>
<dbReference type="Pfam" id="PF02590">
    <property type="entry name" value="SPOUT_MTase"/>
    <property type="match status" value="1"/>
</dbReference>
<dbReference type="PIRSF" id="PIRSF004505">
    <property type="entry name" value="MT_bac"/>
    <property type="match status" value="1"/>
</dbReference>
<dbReference type="SUPFAM" id="SSF75217">
    <property type="entry name" value="alpha/beta knot"/>
    <property type="match status" value="1"/>
</dbReference>